<protein>
    <recommendedName>
        <fullName>Mating-type pheromone BBP1(1)</fullName>
    </recommendedName>
</protein>
<gene>
    <name type="primary">BBP1(1)</name>
</gene>
<keyword id="KW-1003">Cell membrane</keyword>
<keyword id="KW-0449">Lipoprotein</keyword>
<keyword id="KW-0472">Membrane</keyword>
<keyword id="KW-0488">Methylation</keyword>
<keyword id="KW-0588">Pheromone</keyword>
<keyword id="KW-0636">Prenylation</keyword>
<accession>P78742</accession>
<dbReference type="EMBL" id="U74495">
    <property type="protein sequence ID" value="AAB41859.1"/>
    <property type="molecule type" value="Genomic_DNA"/>
</dbReference>
<dbReference type="GO" id="GO:0005886">
    <property type="term" value="C:plasma membrane"/>
    <property type="evidence" value="ECO:0007669"/>
    <property type="project" value="UniProtKB-SubCell"/>
</dbReference>
<dbReference type="GO" id="GO:0000772">
    <property type="term" value="F:mating pheromone activity"/>
    <property type="evidence" value="ECO:0007669"/>
    <property type="project" value="InterPro"/>
</dbReference>
<dbReference type="InterPro" id="IPR012597">
    <property type="entry name" value="Pheromone"/>
</dbReference>
<dbReference type="Pfam" id="PF08015">
    <property type="entry name" value="Pheromone"/>
    <property type="match status" value="1"/>
</dbReference>
<name>BB11_SCHCO</name>
<feature type="propeptide" id="PRO_0000020793" evidence="1">
    <location>
        <begin position="1"/>
        <end status="unknown"/>
    </location>
</feature>
<feature type="peptide" id="PRO_0000020794" description="Mating-type pheromone BBP1(1)">
    <location>
        <begin status="unknown"/>
        <end position="73"/>
    </location>
</feature>
<feature type="propeptide" id="PRO_0000020795" description="Removed in mature form" evidence="1">
    <location>
        <begin position="74"/>
        <end position="76"/>
    </location>
</feature>
<feature type="modified residue" description="Cysteine methyl ester" evidence="1">
    <location>
        <position position="73"/>
    </location>
</feature>
<feature type="lipid moiety-binding region" description="S-farnesyl cysteine" evidence="1">
    <location>
        <position position="73"/>
    </location>
</feature>
<comment type="function">
    <text>Activates B-regulated development.</text>
</comment>
<comment type="subcellular location">
    <subcellularLocation>
        <location evidence="2">Cell membrane</location>
        <topology evidence="2">Lipid-anchor</topology>
        <orientation evidence="2">Cytoplasmic side</orientation>
    </subcellularLocation>
</comment>
<organism>
    <name type="scientific">Schizophyllum commune</name>
    <name type="common">Split gill fungus</name>
    <dbReference type="NCBI Taxonomy" id="5334"/>
    <lineage>
        <taxon>Eukaryota</taxon>
        <taxon>Fungi</taxon>
        <taxon>Dikarya</taxon>
        <taxon>Basidiomycota</taxon>
        <taxon>Agaricomycotina</taxon>
        <taxon>Agaricomycetes</taxon>
        <taxon>Agaricomycetidae</taxon>
        <taxon>Agaricales</taxon>
        <taxon>Schizophyllaceae</taxon>
        <taxon>Schizophyllum</taxon>
    </lineage>
</organism>
<sequence>MDAFTAMFPELFPIEEGLEDALVGSLSDTSAASASATHTSPASTDTFDDADILAILADAEHWRGGNTTAHGWCVVA</sequence>
<evidence type="ECO:0000255" key="1"/>
<evidence type="ECO:0000305" key="2"/>
<reference key="1">
    <citation type="journal article" date="1997" name="Genetics">
        <title>Multiple genes encoding pheromones and a pheromone receptor define the B beta 1 mating-type specificity in Schizophyllum commune.</title>
        <authorList>
            <person name="Vaillancourt L.J."/>
            <person name="Raudaskoski M."/>
            <person name="Specht C.A."/>
            <person name="Raper C.A."/>
        </authorList>
    </citation>
    <scope>NUCLEOTIDE SEQUENCE [GENOMIC DNA]</scope>
    <source>
        <strain>ATCC 44201 / CBS 340.81 / UVM 4-40 / 4-40</strain>
    </source>
</reference>
<proteinExistence type="inferred from homology"/>